<keyword id="KW-0028">Amino-acid biosynthesis</keyword>
<keyword id="KW-0057">Aromatic amino acid biosynthesis</keyword>
<keyword id="KW-0170">Cobalt</keyword>
<keyword id="KW-0963">Cytoplasm</keyword>
<keyword id="KW-0456">Lyase</keyword>
<keyword id="KW-0479">Metal-binding</keyword>
<keyword id="KW-0520">NAD</keyword>
<keyword id="KW-0547">Nucleotide-binding</keyword>
<keyword id="KW-1185">Reference proteome</keyword>
<keyword id="KW-0862">Zinc</keyword>
<comment type="function">
    <text evidence="1">Catalyzes the conversion of 3-deoxy-D-arabino-heptulosonate 7-phosphate (DAHP) to dehydroquinate (DHQ).</text>
</comment>
<comment type="catalytic activity">
    <reaction evidence="1">
        <text>7-phospho-2-dehydro-3-deoxy-D-arabino-heptonate = 3-dehydroquinate + phosphate</text>
        <dbReference type="Rhea" id="RHEA:21968"/>
        <dbReference type="ChEBI" id="CHEBI:32364"/>
        <dbReference type="ChEBI" id="CHEBI:43474"/>
        <dbReference type="ChEBI" id="CHEBI:58394"/>
        <dbReference type="EC" id="4.2.3.4"/>
    </reaction>
</comment>
<comment type="cofactor">
    <cofactor evidence="1">
        <name>Co(2+)</name>
        <dbReference type="ChEBI" id="CHEBI:48828"/>
    </cofactor>
    <cofactor evidence="1">
        <name>Zn(2+)</name>
        <dbReference type="ChEBI" id="CHEBI:29105"/>
    </cofactor>
    <text evidence="1">Binds 1 divalent metal cation per subunit. Can use either Co(2+) or Zn(2+).</text>
</comment>
<comment type="cofactor">
    <cofactor evidence="1">
        <name>NAD(+)</name>
        <dbReference type="ChEBI" id="CHEBI:57540"/>
    </cofactor>
</comment>
<comment type="pathway">
    <text evidence="1">Metabolic intermediate biosynthesis; chorismate biosynthesis; chorismate from D-erythrose 4-phosphate and phosphoenolpyruvate: step 2/7.</text>
</comment>
<comment type="subcellular location">
    <subcellularLocation>
        <location evidence="1">Cytoplasm</location>
    </subcellularLocation>
</comment>
<comment type="similarity">
    <text evidence="1">Belongs to the sugar phosphate cyclases superfamily. Dehydroquinate synthase family.</text>
</comment>
<feature type="chain" id="PRO_1000094554" description="3-dehydroquinate synthase">
    <location>
        <begin position="1"/>
        <end position="383"/>
    </location>
</feature>
<feature type="binding site" evidence="1">
    <location>
        <begin position="81"/>
        <end position="86"/>
    </location>
    <ligand>
        <name>NAD(+)</name>
        <dbReference type="ChEBI" id="CHEBI:57540"/>
    </ligand>
</feature>
<feature type="binding site" evidence="1">
    <location>
        <begin position="115"/>
        <end position="119"/>
    </location>
    <ligand>
        <name>NAD(+)</name>
        <dbReference type="ChEBI" id="CHEBI:57540"/>
    </ligand>
</feature>
<feature type="binding site" evidence="1">
    <location>
        <begin position="139"/>
        <end position="140"/>
    </location>
    <ligand>
        <name>NAD(+)</name>
        <dbReference type="ChEBI" id="CHEBI:57540"/>
    </ligand>
</feature>
<feature type="binding site" evidence="1">
    <location>
        <position position="152"/>
    </location>
    <ligand>
        <name>NAD(+)</name>
        <dbReference type="ChEBI" id="CHEBI:57540"/>
    </ligand>
</feature>
<feature type="binding site" evidence="1">
    <location>
        <position position="161"/>
    </location>
    <ligand>
        <name>NAD(+)</name>
        <dbReference type="ChEBI" id="CHEBI:57540"/>
    </ligand>
</feature>
<feature type="binding site" evidence="1">
    <location>
        <position position="194"/>
    </location>
    <ligand>
        <name>Zn(2+)</name>
        <dbReference type="ChEBI" id="CHEBI:29105"/>
    </ligand>
</feature>
<feature type="binding site" evidence="1">
    <location>
        <position position="256"/>
    </location>
    <ligand>
        <name>Zn(2+)</name>
        <dbReference type="ChEBI" id="CHEBI:29105"/>
    </ligand>
</feature>
<feature type="binding site" evidence="1">
    <location>
        <position position="274"/>
    </location>
    <ligand>
        <name>Zn(2+)</name>
        <dbReference type="ChEBI" id="CHEBI:29105"/>
    </ligand>
</feature>
<proteinExistence type="inferred from homology"/>
<sequence>MSAPLKNSDPVTVDVALGDRSYDIVIGRGILPSLGERIAALRPGARVAIVTDEYVATHWLRATEASLLGAGIATSRIVVDEGEVSKSYEGIEFVCEELIKARIERNDLVVALGGGVVGDLAGFAAAIVRRGVDFVQVPTSLLAQVDSSVGGKTGINSPQGKNLVGAFHQPILVVADTAVLDTLSPRQFRAGYAEVAKYGLLGDEAFFAWLETNHADIVKGSAARESAVAASCRAKAAIVARDERETGERALLNLGHTFGHALETATGFSDRLYHGEGVSIGMVLAAELSAQLGMIADADVARIRRHLATAGLPTRLQDIAGFRQEGLADADGLMALMAQDKKVKRGRLTFILLQAIGQAVVSSDVEPSTVRDFLARKLADAPA</sequence>
<protein>
    <recommendedName>
        <fullName evidence="1">3-dehydroquinate synthase</fullName>
        <shortName evidence="1">DHQS</shortName>
        <ecNumber evidence="1">4.2.3.4</ecNumber>
    </recommendedName>
</protein>
<organism>
    <name type="scientific">Nitrobacter hamburgensis (strain DSM 10229 / NCIMB 13809 / X14)</name>
    <dbReference type="NCBI Taxonomy" id="323097"/>
    <lineage>
        <taxon>Bacteria</taxon>
        <taxon>Pseudomonadati</taxon>
        <taxon>Pseudomonadota</taxon>
        <taxon>Alphaproteobacteria</taxon>
        <taxon>Hyphomicrobiales</taxon>
        <taxon>Nitrobacteraceae</taxon>
        <taxon>Nitrobacter</taxon>
    </lineage>
</organism>
<accession>Q1QQW6</accession>
<gene>
    <name evidence="1" type="primary">aroB</name>
    <name type="ordered locus">Nham_0491</name>
</gene>
<name>AROB_NITHX</name>
<dbReference type="EC" id="4.2.3.4" evidence="1"/>
<dbReference type="EMBL" id="CP000319">
    <property type="protein sequence ID" value="ABE61381.1"/>
    <property type="molecule type" value="Genomic_DNA"/>
</dbReference>
<dbReference type="RefSeq" id="WP_011509085.1">
    <property type="nucleotide sequence ID" value="NC_007964.1"/>
</dbReference>
<dbReference type="SMR" id="Q1QQW6"/>
<dbReference type="STRING" id="323097.Nham_0491"/>
<dbReference type="KEGG" id="nha:Nham_0491"/>
<dbReference type="eggNOG" id="COG0337">
    <property type="taxonomic scope" value="Bacteria"/>
</dbReference>
<dbReference type="HOGENOM" id="CLU_001201_0_2_5"/>
<dbReference type="OrthoDB" id="9806583at2"/>
<dbReference type="UniPathway" id="UPA00053">
    <property type="reaction ID" value="UER00085"/>
</dbReference>
<dbReference type="Proteomes" id="UP000001953">
    <property type="component" value="Chromosome"/>
</dbReference>
<dbReference type="GO" id="GO:0005737">
    <property type="term" value="C:cytoplasm"/>
    <property type="evidence" value="ECO:0007669"/>
    <property type="project" value="UniProtKB-SubCell"/>
</dbReference>
<dbReference type="GO" id="GO:0003856">
    <property type="term" value="F:3-dehydroquinate synthase activity"/>
    <property type="evidence" value="ECO:0007669"/>
    <property type="project" value="UniProtKB-UniRule"/>
</dbReference>
<dbReference type="GO" id="GO:0046872">
    <property type="term" value="F:metal ion binding"/>
    <property type="evidence" value="ECO:0007669"/>
    <property type="project" value="UniProtKB-KW"/>
</dbReference>
<dbReference type="GO" id="GO:0000166">
    <property type="term" value="F:nucleotide binding"/>
    <property type="evidence" value="ECO:0007669"/>
    <property type="project" value="UniProtKB-KW"/>
</dbReference>
<dbReference type="GO" id="GO:0008652">
    <property type="term" value="P:amino acid biosynthetic process"/>
    <property type="evidence" value="ECO:0007669"/>
    <property type="project" value="UniProtKB-KW"/>
</dbReference>
<dbReference type="GO" id="GO:0009073">
    <property type="term" value="P:aromatic amino acid family biosynthetic process"/>
    <property type="evidence" value="ECO:0007669"/>
    <property type="project" value="UniProtKB-KW"/>
</dbReference>
<dbReference type="GO" id="GO:0009423">
    <property type="term" value="P:chorismate biosynthetic process"/>
    <property type="evidence" value="ECO:0007669"/>
    <property type="project" value="UniProtKB-UniRule"/>
</dbReference>
<dbReference type="CDD" id="cd08195">
    <property type="entry name" value="DHQS"/>
    <property type="match status" value="1"/>
</dbReference>
<dbReference type="FunFam" id="3.40.50.1970:FF:000001">
    <property type="entry name" value="3-dehydroquinate synthase"/>
    <property type="match status" value="1"/>
</dbReference>
<dbReference type="Gene3D" id="3.40.50.1970">
    <property type="match status" value="1"/>
</dbReference>
<dbReference type="Gene3D" id="1.20.1090.10">
    <property type="entry name" value="Dehydroquinate synthase-like - alpha domain"/>
    <property type="match status" value="1"/>
</dbReference>
<dbReference type="HAMAP" id="MF_00110">
    <property type="entry name" value="DHQ_synthase"/>
    <property type="match status" value="1"/>
</dbReference>
<dbReference type="InterPro" id="IPR050071">
    <property type="entry name" value="Dehydroquinate_synthase"/>
</dbReference>
<dbReference type="InterPro" id="IPR016037">
    <property type="entry name" value="DHQ_synth_AroB"/>
</dbReference>
<dbReference type="InterPro" id="IPR030963">
    <property type="entry name" value="DHQ_synth_fam"/>
</dbReference>
<dbReference type="InterPro" id="IPR030960">
    <property type="entry name" value="DHQS/DOIS_N"/>
</dbReference>
<dbReference type="InterPro" id="IPR056179">
    <property type="entry name" value="DHQS_C"/>
</dbReference>
<dbReference type="NCBIfam" id="TIGR01357">
    <property type="entry name" value="aroB"/>
    <property type="match status" value="1"/>
</dbReference>
<dbReference type="PANTHER" id="PTHR43622">
    <property type="entry name" value="3-DEHYDROQUINATE SYNTHASE"/>
    <property type="match status" value="1"/>
</dbReference>
<dbReference type="PANTHER" id="PTHR43622:SF7">
    <property type="entry name" value="3-DEHYDROQUINATE SYNTHASE, CHLOROPLASTIC"/>
    <property type="match status" value="1"/>
</dbReference>
<dbReference type="Pfam" id="PF01761">
    <property type="entry name" value="DHQ_synthase"/>
    <property type="match status" value="1"/>
</dbReference>
<dbReference type="Pfam" id="PF24621">
    <property type="entry name" value="DHQS_C"/>
    <property type="match status" value="1"/>
</dbReference>
<dbReference type="PIRSF" id="PIRSF001455">
    <property type="entry name" value="DHQ_synth"/>
    <property type="match status" value="1"/>
</dbReference>
<dbReference type="SUPFAM" id="SSF56796">
    <property type="entry name" value="Dehydroquinate synthase-like"/>
    <property type="match status" value="1"/>
</dbReference>
<evidence type="ECO:0000255" key="1">
    <source>
        <dbReference type="HAMAP-Rule" id="MF_00110"/>
    </source>
</evidence>
<reference key="1">
    <citation type="submission" date="2006-03" db="EMBL/GenBank/DDBJ databases">
        <title>Complete sequence of chromosome of Nitrobacter hamburgensis X14.</title>
        <authorList>
            <consortium name="US DOE Joint Genome Institute"/>
            <person name="Copeland A."/>
            <person name="Lucas S."/>
            <person name="Lapidus A."/>
            <person name="Barry K."/>
            <person name="Detter J.C."/>
            <person name="Glavina del Rio T."/>
            <person name="Hammon N."/>
            <person name="Israni S."/>
            <person name="Dalin E."/>
            <person name="Tice H."/>
            <person name="Pitluck S."/>
            <person name="Chain P."/>
            <person name="Malfatti S."/>
            <person name="Shin M."/>
            <person name="Vergez L."/>
            <person name="Schmutz J."/>
            <person name="Larimer F."/>
            <person name="Land M."/>
            <person name="Hauser L."/>
            <person name="Kyrpides N."/>
            <person name="Ivanova N."/>
            <person name="Ward B."/>
            <person name="Arp D."/>
            <person name="Klotz M."/>
            <person name="Stein L."/>
            <person name="O'Mullan G."/>
            <person name="Starkenburg S."/>
            <person name="Sayavedra L."/>
            <person name="Poret-Peterson A.T."/>
            <person name="Gentry M.E."/>
            <person name="Bruce D."/>
            <person name="Richardson P."/>
        </authorList>
    </citation>
    <scope>NUCLEOTIDE SEQUENCE [LARGE SCALE GENOMIC DNA]</scope>
    <source>
        <strain>DSM 10229 / NCIMB 13809 / X14</strain>
    </source>
</reference>